<comment type="function">
    <text evidence="1">NAD-dependent lysine deacetylase and desuccinylase that specifically removes acetyl and succinyl groups on target proteins. Modulates the activities of several proteins which are inactive in their acylated form.</text>
</comment>
<comment type="catalytic activity">
    <reaction evidence="1">
        <text>N(6)-acetyl-L-lysyl-[protein] + NAD(+) + H2O = 2''-O-acetyl-ADP-D-ribose + nicotinamide + L-lysyl-[protein]</text>
        <dbReference type="Rhea" id="RHEA:43636"/>
        <dbReference type="Rhea" id="RHEA-COMP:9752"/>
        <dbReference type="Rhea" id="RHEA-COMP:10731"/>
        <dbReference type="ChEBI" id="CHEBI:15377"/>
        <dbReference type="ChEBI" id="CHEBI:17154"/>
        <dbReference type="ChEBI" id="CHEBI:29969"/>
        <dbReference type="ChEBI" id="CHEBI:57540"/>
        <dbReference type="ChEBI" id="CHEBI:61930"/>
        <dbReference type="ChEBI" id="CHEBI:83767"/>
        <dbReference type="EC" id="2.3.1.286"/>
    </reaction>
</comment>
<comment type="catalytic activity">
    <reaction evidence="1">
        <text>N(6)-succinyl-L-lysyl-[protein] + NAD(+) + H2O = 2''-O-succinyl-ADP-D-ribose + nicotinamide + L-lysyl-[protein]</text>
        <dbReference type="Rhea" id="RHEA:47668"/>
        <dbReference type="Rhea" id="RHEA-COMP:9752"/>
        <dbReference type="Rhea" id="RHEA-COMP:11877"/>
        <dbReference type="ChEBI" id="CHEBI:15377"/>
        <dbReference type="ChEBI" id="CHEBI:17154"/>
        <dbReference type="ChEBI" id="CHEBI:29969"/>
        <dbReference type="ChEBI" id="CHEBI:57540"/>
        <dbReference type="ChEBI" id="CHEBI:87830"/>
        <dbReference type="ChEBI" id="CHEBI:87832"/>
    </reaction>
</comment>
<comment type="subcellular location">
    <subcellularLocation>
        <location evidence="1">Cytoplasm</location>
    </subcellularLocation>
</comment>
<comment type="domain">
    <text evidence="1">2 residues (Tyr-53 and Arg-56) present in a large hydrophobic pocket are probably involved in substrate specificity. They are important for desuccinylation activity, but dispensable for deacetylation activity.</text>
</comment>
<comment type="similarity">
    <text evidence="1">Belongs to the sirtuin family. Class III subfamily.</text>
</comment>
<feature type="chain" id="PRO_0000110295" description="NAD-dependent protein deacylase">
    <location>
        <begin position="1"/>
        <end position="234"/>
    </location>
</feature>
<feature type="domain" description="Deacetylase sirtuin-type" evidence="2">
    <location>
        <begin position="1"/>
        <end position="234"/>
    </location>
</feature>
<feature type="active site" description="Proton acceptor" evidence="1">
    <location>
        <position position="104"/>
    </location>
</feature>
<feature type="binding site" evidence="1">
    <location>
        <begin position="9"/>
        <end position="28"/>
    </location>
    <ligand>
        <name>NAD(+)</name>
        <dbReference type="ChEBI" id="CHEBI:57540"/>
    </ligand>
</feature>
<feature type="binding site" evidence="1">
    <location>
        <position position="53"/>
    </location>
    <ligand>
        <name>substrate</name>
    </ligand>
</feature>
<feature type="binding site" evidence="1">
    <location>
        <position position="56"/>
    </location>
    <ligand>
        <name>substrate</name>
    </ligand>
</feature>
<feature type="binding site" evidence="1">
    <location>
        <begin position="86"/>
        <end position="89"/>
    </location>
    <ligand>
        <name>NAD(+)</name>
        <dbReference type="ChEBI" id="CHEBI:57540"/>
    </ligand>
</feature>
<feature type="binding site" evidence="1">
    <location>
        <begin position="175"/>
        <end position="177"/>
    </location>
    <ligand>
        <name>NAD(+)</name>
        <dbReference type="ChEBI" id="CHEBI:57540"/>
    </ligand>
</feature>
<protein>
    <recommendedName>
        <fullName evidence="1">NAD-dependent protein deacylase</fullName>
        <ecNumber evidence="1">2.3.1.286</ecNumber>
    </recommendedName>
    <alternativeName>
        <fullName evidence="1">Regulatory protein SIR2 homolog</fullName>
    </alternativeName>
</protein>
<reference key="1">
    <citation type="journal article" date="2003" name="Science">
        <title>A genomic view of the human-Bacteroides thetaiotaomicron symbiosis.</title>
        <authorList>
            <person name="Xu J."/>
            <person name="Bjursell M.K."/>
            <person name="Himrod J."/>
            <person name="Deng S."/>
            <person name="Carmichael L.K."/>
            <person name="Chiang H.C."/>
            <person name="Hooper L.V."/>
            <person name="Gordon J.I."/>
        </authorList>
    </citation>
    <scope>NUCLEOTIDE SEQUENCE [LARGE SCALE GENOMIC DNA]</scope>
    <source>
        <strain>ATCC 29148 / DSM 2079 / JCM 5827 / CCUG 10774 / NCTC 10582 / VPI-5482 / E50</strain>
    </source>
</reference>
<organism>
    <name type="scientific">Bacteroides thetaiotaomicron (strain ATCC 29148 / DSM 2079 / JCM 5827 / CCUG 10774 / NCTC 10582 / VPI-5482 / E50)</name>
    <dbReference type="NCBI Taxonomy" id="226186"/>
    <lineage>
        <taxon>Bacteria</taxon>
        <taxon>Pseudomonadati</taxon>
        <taxon>Bacteroidota</taxon>
        <taxon>Bacteroidia</taxon>
        <taxon>Bacteroidales</taxon>
        <taxon>Bacteroidaceae</taxon>
        <taxon>Bacteroides</taxon>
    </lineage>
</organism>
<keyword id="KW-0963">Cytoplasm</keyword>
<keyword id="KW-0520">NAD</keyword>
<keyword id="KW-1185">Reference proteome</keyword>
<keyword id="KW-0808">Transferase</keyword>
<proteinExistence type="inferred from homology"/>
<dbReference type="EC" id="2.3.1.286" evidence="1"/>
<dbReference type="EMBL" id="AE015928">
    <property type="protein sequence ID" value="AAO78081.1"/>
    <property type="molecule type" value="Genomic_DNA"/>
</dbReference>
<dbReference type="RefSeq" id="NP_811887.1">
    <property type="nucleotide sequence ID" value="NC_004663.1"/>
</dbReference>
<dbReference type="RefSeq" id="WP_011108550.1">
    <property type="nucleotide sequence ID" value="NC_004663.1"/>
</dbReference>
<dbReference type="SMR" id="Q8A3H9"/>
<dbReference type="FunCoup" id="Q8A3H9">
    <property type="interactions" value="381"/>
</dbReference>
<dbReference type="STRING" id="226186.BT_2975"/>
<dbReference type="PaxDb" id="226186-BT_2975"/>
<dbReference type="EnsemblBacteria" id="AAO78081">
    <property type="protein sequence ID" value="AAO78081"/>
    <property type="gene ID" value="BT_2975"/>
</dbReference>
<dbReference type="GeneID" id="60924156"/>
<dbReference type="KEGG" id="bth:BT_2975"/>
<dbReference type="PATRIC" id="fig|226186.12.peg.3024"/>
<dbReference type="eggNOG" id="COG0846">
    <property type="taxonomic scope" value="Bacteria"/>
</dbReference>
<dbReference type="HOGENOM" id="CLU_023643_3_1_10"/>
<dbReference type="InParanoid" id="Q8A3H9"/>
<dbReference type="OrthoDB" id="9800582at2"/>
<dbReference type="Proteomes" id="UP000001414">
    <property type="component" value="Chromosome"/>
</dbReference>
<dbReference type="GO" id="GO:0005737">
    <property type="term" value="C:cytoplasm"/>
    <property type="evidence" value="ECO:0007669"/>
    <property type="project" value="UniProtKB-SubCell"/>
</dbReference>
<dbReference type="GO" id="GO:0017136">
    <property type="term" value="F:histone deacetylase activity, NAD-dependent"/>
    <property type="evidence" value="ECO:0000318"/>
    <property type="project" value="GO_Central"/>
</dbReference>
<dbReference type="GO" id="GO:0070403">
    <property type="term" value="F:NAD+ binding"/>
    <property type="evidence" value="ECO:0000318"/>
    <property type="project" value="GO_Central"/>
</dbReference>
<dbReference type="GO" id="GO:0036054">
    <property type="term" value="F:protein-malonyllysine demalonylase activity"/>
    <property type="evidence" value="ECO:0007669"/>
    <property type="project" value="InterPro"/>
</dbReference>
<dbReference type="GO" id="GO:0036055">
    <property type="term" value="F:protein-succinyllysine desuccinylase activity"/>
    <property type="evidence" value="ECO:0007669"/>
    <property type="project" value="UniProtKB-UniRule"/>
</dbReference>
<dbReference type="CDD" id="cd01412">
    <property type="entry name" value="SIRT5_Af1_CobB"/>
    <property type="match status" value="1"/>
</dbReference>
<dbReference type="Gene3D" id="3.30.1600.10">
    <property type="entry name" value="SIR2/SIRT2 'Small Domain"/>
    <property type="match status" value="1"/>
</dbReference>
<dbReference type="Gene3D" id="3.40.50.1220">
    <property type="entry name" value="TPP-binding domain"/>
    <property type="match status" value="1"/>
</dbReference>
<dbReference type="HAMAP" id="MF_01121">
    <property type="entry name" value="Sirtuin_ClassIII"/>
    <property type="match status" value="1"/>
</dbReference>
<dbReference type="InterPro" id="IPR029035">
    <property type="entry name" value="DHS-like_NAD/FAD-binding_dom"/>
</dbReference>
<dbReference type="InterPro" id="IPR050134">
    <property type="entry name" value="NAD-dep_sirtuin_deacylases"/>
</dbReference>
<dbReference type="InterPro" id="IPR003000">
    <property type="entry name" value="Sirtuin"/>
</dbReference>
<dbReference type="InterPro" id="IPR026591">
    <property type="entry name" value="Sirtuin_cat_small_dom_sf"/>
</dbReference>
<dbReference type="InterPro" id="IPR027546">
    <property type="entry name" value="Sirtuin_class_III"/>
</dbReference>
<dbReference type="InterPro" id="IPR026590">
    <property type="entry name" value="Ssirtuin_cat_dom"/>
</dbReference>
<dbReference type="PANTHER" id="PTHR11085:SF4">
    <property type="entry name" value="NAD-DEPENDENT PROTEIN DEACYLASE"/>
    <property type="match status" value="1"/>
</dbReference>
<dbReference type="PANTHER" id="PTHR11085">
    <property type="entry name" value="NAD-DEPENDENT PROTEIN DEACYLASE SIRTUIN-5, MITOCHONDRIAL-RELATED"/>
    <property type="match status" value="1"/>
</dbReference>
<dbReference type="Pfam" id="PF02146">
    <property type="entry name" value="SIR2"/>
    <property type="match status" value="1"/>
</dbReference>
<dbReference type="SUPFAM" id="SSF52467">
    <property type="entry name" value="DHS-like NAD/FAD-binding domain"/>
    <property type="match status" value="1"/>
</dbReference>
<dbReference type="PROSITE" id="PS50305">
    <property type="entry name" value="SIRTUIN"/>
    <property type="match status" value="1"/>
</dbReference>
<accession>Q8A3H9</accession>
<name>NPD_BACTN</name>
<sequence length="234" mass="26080">MKNLVVLTGAGMSAESGISTFRDAGGLWDKYPVEQVATPEGYQRDPALVINFYNARRKQLLEVKPNRGHELLAELEKNFNVTVITQNVDNLHERAGSSHIVHLHGELTKVCSSRDPYNPHYIKELKPEEYEVKMGDKAGDGTQLRPFIVWFGEAVPEIETAVRYVEKADIFVIIGTSLNVYPAAGLLHYVPRGAEVYLIDPKPVDTHTSRSIHVLRKGASEGVEELKQLLIPAP</sequence>
<gene>
    <name evidence="1" type="primary">cobB</name>
    <name type="ordered locus">BT_2975</name>
</gene>
<evidence type="ECO:0000255" key="1">
    <source>
        <dbReference type="HAMAP-Rule" id="MF_01121"/>
    </source>
</evidence>
<evidence type="ECO:0000255" key="2">
    <source>
        <dbReference type="PROSITE-ProRule" id="PRU00236"/>
    </source>
</evidence>